<feature type="chain" id="PRO_0000356728" description="Large ribosomal subunit protein bL33C">
    <location>
        <begin position="1"/>
        <end position="49"/>
    </location>
</feature>
<accession>Q48QS5</accession>
<sequence length="49" mass="5913">MRVNITLEHKESGERLYLTSKNKRNTPDRLQLKKYSPKLRKHVTFTEVK</sequence>
<gene>
    <name evidence="1" type="primary">rpmG3</name>
    <name type="ordered locus">M28_Spy1825</name>
</gene>
<proteinExistence type="inferred from homology"/>
<reference key="1">
    <citation type="journal article" date="2005" name="J. Infect. Dis.">
        <title>Genome sequence of a serotype M28 strain of group A Streptococcus: potential new insights into puerperal sepsis and bacterial disease specificity.</title>
        <authorList>
            <person name="Green N.M."/>
            <person name="Zhang S."/>
            <person name="Porcella S.F."/>
            <person name="Nagiec M.J."/>
            <person name="Barbian K.D."/>
            <person name="Beres S.B."/>
            <person name="Lefebvre R.B."/>
            <person name="Musser J.M."/>
        </authorList>
    </citation>
    <scope>NUCLEOTIDE SEQUENCE [LARGE SCALE GENOMIC DNA]</scope>
    <source>
        <strain>MGAS6180</strain>
    </source>
</reference>
<dbReference type="EMBL" id="CP000056">
    <property type="protein sequence ID" value="AAX72935.1"/>
    <property type="molecule type" value="Genomic_DNA"/>
</dbReference>
<dbReference type="SMR" id="Q48QS5"/>
<dbReference type="KEGG" id="spb:M28_Spy1825"/>
<dbReference type="HOGENOM" id="CLU_190949_3_2_9"/>
<dbReference type="GO" id="GO:0005737">
    <property type="term" value="C:cytoplasm"/>
    <property type="evidence" value="ECO:0007669"/>
    <property type="project" value="UniProtKB-ARBA"/>
</dbReference>
<dbReference type="GO" id="GO:1990904">
    <property type="term" value="C:ribonucleoprotein complex"/>
    <property type="evidence" value="ECO:0007669"/>
    <property type="project" value="UniProtKB-KW"/>
</dbReference>
<dbReference type="GO" id="GO:0005840">
    <property type="term" value="C:ribosome"/>
    <property type="evidence" value="ECO:0007669"/>
    <property type="project" value="UniProtKB-KW"/>
</dbReference>
<dbReference type="GO" id="GO:0003735">
    <property type="term" value="F:structural constituent of ribosome"/>
    <property type="evidence" value="ECO:0007669"/>
    <property type="project" value="InterPro"/>
</dbReference>
<dbReference type="GO" id="GO:0006412">
    <property type="term" value="P:translation"/>
    <property type="evidence" value="ECO:0007669"/>
    <property type="project" value="UniProtKB-UniRule"/>
</dbReference>
<dbReference type="Gene3D" id="2.20.28.120">
    <property type="entry name" value="Ribosomal protein L33"/>
    <property type="match status" value="1"/>
</dbReference>
<dbReference type="HAMAP" id="MF_00294">
    <property type="entry name" value="Ribosomal_bL33"/>
    <property type="match status" value="1"/>
</dbReference>
<dbReference type="InterPro" id="IPR001705">
    <property type="entry name" value="Ribosomal_bL33"/>
</dbReference>
<dbReference type="InterPro" id="IPR018264">
    <property type="entry name" value="Ribosomal_bL33_CS"/>
</dbReference>
<dbReference type="InterPro" id="IPR038584">
    <property type="entry name" value="Ribosomal_bL33_sf"/>
</dbReference>
<dbReference type="InterPro" id="IPR011332">
    <property type="entry name" value="Ribosomal_zn-bd"/>
</dbReference>
<dbReference type="NCBIfam" id="NF001764">
    <property type="entry name" value="PRK00504.1"/>
    <property type="match status" value="1"/>
</dbReference>
<dbReference type="NCBIfam" id="NF001860">
    <property type="entry name" value="PRK00595.1"/>
    <property type="match status" value="1"/>
</dbReference>
<dbReference type="NCBIfam" id="TIGR01023">
    <property type="entry name" value="rpmG_bact"/>
    <property type="match status" value="1"/>
</dbReference>
<dbReference type="PANTHER" id="PTHR43168">
    <property type="entry name" value="50S RIBOSOMAL PROTEIN L33, CHLOROPLASTIC"/>
    <property type="match status" value="1"/>
</dbReference>
<dbReference type="PANTHER" id="PTHR43168:SF2">
    <property type="entry name" value="LARGE RIBOSOMAL SUBUNIT PROTEIN BL33C"/>
    <property type="match status" value="1"/>
</dbReference>
<dbReference type="Pfam" id="PF00471">
    <property type="entry name" value="Ribosomal_L33"/>
    <property type="match status" value="1"/>
</dbReference>
<dbReference type="SUPFAM" id="SSF57829">
    <property type="entry name" value="Zn-binding ribosomal proteins"/>
    <property type="match status" value="1"/>
</dbReference>
<dbReference type="PROSITE" id="PS00582">
    <property type="entry name" value="RIBOSOMAL_L33"/>
    <property type="match status" value="1"/>
</dbReference>
<name>RL333_STRPM</name>
<evidence type="ECO:0000255" key="1">
    <source>
        <dbReference type="HAMAP-Rule" id="MF_00294"/>
    </source>
</evidence>
<keyword id="KW-0687">Ribonucleoprotein</keyword>
<keyword id="KW-0689">Ribosomal protein</keyword>
<comment type="similarity">
    <text evidence="1">Belongs to the bacterial ribosomal protein bL33 family.</text>
</comment>
<organism>
    <name type="scientific">Streptococcus pyogenes serotype M28 (strain MGAS6180)</name>
    <dbReference type="NCBI Taxonomy" id="319701"/>
    <lineage>
        <taxon>Bacteria</taxon>
        <taxon>Bacillati</taxon>
        <taxon>Bacillota</taxon>
        <taxon>Bacilli</taxon>
        <taxon>Lactobacillales</taxon>
        <taxon>Streptococcaceae</taxon>
        <taxon>Streptococcus</taxon>
    </lineage>
</organism>
<protein>
    <recommendedName>
        <fullName evidence="1">Large ribosomal subunit protein bL33C</fullName>
    </recommendedName>
    <alternativeName>
        <fullName evidence="1">50S ribosomal protein L33 3</fullName>
    </alternativeName>
</protein>